<organism>
    <name type="scientific">Staphylococcus epidermidis (strain ATCC 12228 / FDA PCI 1200)</name>
    <dbReference type="NCBI Taxonomy" id="176280"/>
    <lineage>
        <taxon>Bacteria</taxon>
        <taxon>Bacillati</taxon>
        <taxon>Bacillota</taxon>
        <taxon>Bacilli</taxon>
        <taxon>Bacillales</taxon>
        <taxon>Staphylococcaceae</taxon>
        <taxon>Staphylococcus</taxon>
    </lineage>
</organism>
<keyword id="KW-0143">Chaperone</keyword>
<keyword id="KW-0963">Cytoplasm</keyword>
<keyword id="KW-0533">Nickel</keyword>
<keyword id="KW-0996">Nickel insertion</keyword>
<protein>
    <recommendedName>
        <fullName evidence="1">Urease accessory protein UreE</fullName>
    </recommendedName>
</protein>
<dbReference type="EMBL" id="AE015929">
    <property type="protein sequence ID" value="AAO05505.1"/>
    <property type="molecule type" value="Genomic_DNA"/>
</dbReference>
<dbReference type="RefSeq" id="NP_765419.1">
    <property type="nucleotide sequence ID" value="NC_004461.1"/>
</dbReference>
<dbReference type="RefSeq" id="WP_001832382.1">
    <property type="nucleotide sequence ID" value="NZ_WBME01000034.1"/>
</dbReference>
<dbReference type="SMR" id="Q8CNC8"/>
<dbReference type="GeneID" id="50018035"/>
<dbReference type="KEGG" id="sep:SE_1864"/>
<dbReference type="PATRIC" id="fig|176280.10.peg.1821"/>
<dbReference type="eggNOG" id="COG2371">
    <property type="taxonomic scope" value="Bacteria"/>
</dbReference>
<dbReference type="HOGENOM" id="CLU_093757_3_1_9"/>
<dbReference type="OrthoDB" id="9810882at2"/>
<dbReference type="Proteomes" id="UP000001411">
    <property type="component" value="Chromosome"/>
</dbReference>
<dbReference type="GO" id="GO:0005737">
    <property type="term" value="C:cytoplasm"/>
    <property type="evidence" value="ECO:0007669"/>
    <property type="project" value="UniProtKB-SubCell"/>
</dbReference>
<dbReference type="GO" id="GO:0016151">
    <property type="term" value="F:nickel cation binding"/>
    <property type="evidence" value="ECO:0007669"/>
    <property type="project" value="UniProtKB-UniRule"/>
</dbReference>
<dbReference type="GO" id="GO:0051082">
    <property type="term" value="F:unfolded protein binding"/>
    <property type="evidence" value="ECO:0007669"/>
    <property type="project" value="UniProtKB-UniRule"/>
</dbReference>
<dbReference type="GO" id="GO:0006457">
    <property type="term" value="P:protein folding"/>
    <property type="evidence" value="ECO:0007669"/>
    <property type="project" value="InterPro"/>
</dbReference>
<dbReference type="GO" id="GO:0065003">
    <property type="term" value="P:protein-containing complex assembly"/>
    <property type="evidence" value="ECO:0007669"/>
    <property type="project" value="InterPro"/>
</dbReference>
<dbReference type="GO" id="GO:0019627">
    <property type="term" value="P:urea metabolic process"/>
    <property type="evidence" value="ECO:0007669"/>
    <property type="project" value="InterPro"/>
</dbReference>
<dbReference type="CDD" id="cd00571">
    <property type="entry name" value="UreE"/>
    <property type="match status" value="1"/>
</dbReference>
<dbReference type="Gene3D" id="2.60.260.20">
    <property type="entry name" value="Urease metallochaperone UreE, N-terminal domain"/>
    <property type="match status" value="1"/>
</dbReference>
<dbReference type="Gene3D" id="3.30.70.790">
    <property type="entry name" value="UreE, C-terminal domain"/>
    <property type="match status" value="1"/>
</dbReference>
<dbReference type="HAMAP" id="MF_00822">
    <property type="entry name" value="UreE"/>
    <property type="match status" value="1"/>
</dbReference>
<dbReference type="InterPro" id="IPR012406">
    <property type="entry name" value="UreE"/>
</dbReference>
<dbReference type="InterPro" id="IPR007864">
    <property type="entry name" value="UreE_C_dom"/>
</dbReference>
<dbReference type="InterPro" id="IPR004029">
    <property type="entry name" value="UreE_N"/>
</dbReference>
<dbReference type="InterPro" id="IPR036118">
    <property type="entry name" value="UreE_N_sf"/>
</dbReference>
<dbReference type="NCBIfam" id="NF009755">
    <property type="entry name" value="PRK13261.2-1"/>
    <property type="match status" value="1"/>
</dbReference>
<dbReference type="Pfam" id="PF05194">
    <property type="entry name" value="UreE_C"/>
    <property type="match status" value="1"/>
</dbReference>
<dbReference type="Pfam" id="PF02814">
    <property type="entry name" value="UreE_N"/>
    <property type="match status" value="1"/>
</dbReference>
<dbReference type="PIRSF" id="PIRSF036402">
    <property type="entry name" value="Ureas_acces_UreE"/>
    <property type="match status" value="1"/>
</dbReference>
<dbReference type="SMART" id="SM00988">
    <property type="entry name" value="UreE_N"/>
    <property type="match status" value="1"/>
</dbReference>
<dbReference type="SUPFAM" id="SSF69737">
    <property type="entry name" value="Urease metallochaperone UreE, C-terminal domain"/>
    <property type="match status" value="1"/>
</dbReference>
<dbReference type="SUPFAM" id="SSF69287">
    <property type="entry name" value="Urease metallochaperone UreE, N-terminal domain"/>
    <property type="match status" value="1"/>
</dbReference>
<reference key="1">
    <citation type="journal article" date="2003" name="Mol. Microbiol.">
        <title>Genome-based analysis of virulence genes in a non-biofilm-forming Staphylococcus epidermidis strain (ATCC 12228).</title>
        <authorList>
            <person name="Zhang Y.-Q."/>
            <person name="Ren S.-X."/>
            <person name="Li H.-L."/>
            <person name="Wang Y.-X."/>
            <person name="Fu G."/>
            <person name="Yang J."/>
            <person name="Qin Z.-Q."/>
            <person name="Miao Y.-G."/>
            <person name="Wang W.-Y."/>
            <person name="Chen R.-S."/>
            <person name="Shen Y."/>
            <person name="Chen Z."/>
            <person name="Yuan Z.-H."/>
            <person name="Zhao G.-P."/>
            <person name="Qu D."/>
            <person name="Danchin A."/>
            <person name="Wen Y.-M."/>
        </authorList>
    </citation>
    <scope>NUCLEOTIDE SEQUENCE [LARGE SCALE GENOMIC DNA]</scope>
    <source>
        <strain>ATCC 12228 / FDA PCI 1200</strain>
    </source>
</reference>
<gene>
    <name evidence="1" type="primary">ureE</name>
    <name type="ordered locus">SE_1864</name>
</gene>
<sequence length="150" mass="17497">MIIEEIQGNIANLSQDEKQKHVEKVYLENSDLVKRIQRVKTDHGNEIGIRLKQPIDLQYGDILYQDDTNMIIVDVNSEDLLVIKPRNLKEMGDIAHQLGNRHLPAQFTETEMLIQYDYLVEDLLKELGIPYSHEDRKVNQAFRHIGHSHD</sequence>
<evidence type="ECO:0000255" key="1">
    <source>
        <dbReference type="HAMAP-Rule" id="MF_00822"/>
    </source>
</evidence>
<comment type="function">
    <text evidence="1">Involved in urease metallocenter assembly. Binds nickel. Probably functions as a nickel donor during metallocenter assembly.</text>
</comment>
<comment type="subcellular location">
    <subcellularLocation>
        <location evidence="1">Cytoplasm</location>
    </subcellularLocation>
</comment>
<comment type="similarity">
    <text evidence="1">Belongs to the UreE family.</text>
</comment>
<accession>Q8CNC8</accession>
<feature type="chain" id="PRO_0000223443" description="Urease accessory protein UreE">
    <location>
        <begin position="1"/>
        <end position="150"/>
    </location>
</feature>
<name>UREE_STAES</name>
<proteinExistence type="inferred from homology"/>